<reference key="1">
    <citation type="online journal article" date="1996" name="Plant Gene Register">
        <title>Cloning a cDNA encoding imidazoleglycerol-phosphate dehydratase, the Yeast HIS3 homolog from pea.</title>
        <authorList>
            <person name="Kim J."/>
            <person name="Theologis A."/>
        </authorList>
        <locator>PGR96-033</locator>
    </citation>
    <scope>NUCLEOTIDE SEQUENCE [MRNA]</scope>
    <source>
        <strain>cv. Alaska</strain>
    </source>
</reference>
<proteinExistence type="evidence at transcript level"/>
<comment type="catalytic activity">
    <reaction evidence="1">
        <text>D-erythro-1-(imidazol-4-yl)glycerol 3-phosphate = 3-(imidazol-4-yl)-2-oxopropyl phosphate + H2O</text>
        <dbReference type="Rhea" id="RHEA:11040"/>
        <dbReference type="ChEBI" id="CHEBI:15377"/>
        <dbReference type="ChEBI" id="CHEBI:57766"/>
        <dbReference type="ChEBI" id="CHEBI:58278"/>
        <dbReference type="EC" id="4.2.1.19"/>
    </reaction>
</comment>
<comment type="cofactor">
    <cofactor evidence="1">
        <name>Mn(2+)</name>
        <dbReference type="ChEBI" id="CHEBI:29035"/>
    </cofactor>
    <text evidence="1">Binds 2 manganese ions per subunit.</text>
</comment>
<comment type="pathway">
    <text evidence="1">Amino-acid biosynthesis; L-histidine biosynthesis; L-histidine from 5-phospho-alpha-D-ribose 1-diphosphate: step 6/9.</text>
</comment>
<comment type="subcellular location">
    <subcellularLocation>
        <location evidence="2">Plastid</location>
        <location evidence="2">Chloroplast</location>
    </subcellularLocation>
</comment>
<comment type="similarity">
    <text evidence="4">Belongs to the imidazoleglycerol-phosphate dehydratase family.</text>
</comment>
<protein>
    <recommendedName>
        <fullName evidence="3">Imidazoleglycerol-phosphate dehydratase, chloroplastic</fullName>
        <shortName evidence="3">IGPD</shortName>
        <ecNumber evidence="1">4.2.1.19</ecNumber>
    </recommendedName>
</protein>
<organism>
    <name type="scientific">Pisum sativum</name>
    <name type="common">Garden pea</name>
    <name type="synonym">Lathyrus oleraceus</name>
    <dbReference type="NCBI Taxonomy" id="3888"/>
    <lineage>
        <taxon>Eukaryota</taxon>
        <taxon>Viridiplantae</taxon>
        <taxon>Streptophyta</taxon>
        <taxon>Embryophyta</taxon>
        <taxon>Tracheophyta</taxon>
        <taxon>Spermatophyta</taxon>
        <taxon>Magnoliopsida</taxon>
        <taxon>eudicotyledons</taxon>
        <taxon>Gunneridae</taxon>
        <taxon>Pentapetalae</taxon>
        <taxon>rosids</taxon>
        <taxon>fabids</taxon>
        <taxon>Fabales</taxon>
        <taxon>Fabaceae</taxon>
        <taxon>Papilionoideae</taxon>
        <taxon>50 kb inversion clade</taxon>
        <taxon>NPAAA clade</taxon>
        <taxon>Hologalegina</taxon>
        <taxon>IRL clade</taxon>
        <taxon>Fabeae</taxon>
        <taxon>Pisum</taxon>
    </lineage>
</organism>
<sequence>MELYAASHSLPNYPSSFLFKPKITTFHTTLFPTKFAPFKASFFSPNHLTLTTPMNPPTTSLSSAAFVEHNNGSTSTSLPFHPETRVGEVKRVTKETNVSVKINLDGSGVADSSTGIPFLDHMLDQLASHGLFDVHVKATGDVHIDDHHTNEDVALAIGTALLQALGDRKGINRFGDFSAPLDEALIHVSLDLSGRPHLSYNLDIPTQRVGTYDTQVVEHFLQSIVNTSGMTLHIRQLAGRNSHHIIEATFKAFARALRQATEYDPRRRGSVPSSKGVLSRS</sequence>
<feature type="transit peptide" description="Chloroplast" evidence="2">
    <location>
        <begin position="1"/>
        <end position="85"/>
    </location>
</feature>
<feature type="chain" id="PRO_0000158255" description="Imidazoleglycerol-phosphate dehydratase, chloroplastic">
    <location>
        <begin position="86"/>
        <end position="281"/>
    </location>
</feature>
<feature type="binding site" evidence="1">
    <location>
        <position position="95"/>
    </location>
    <ligand>
        <name>substrate</name>
    </ligand>
</feature>
<feature type="binding site" evidence="1">
    <location>
        <begin position="121"/>
        <end position="129"/>
    </location>
    <ligand>
        <name>substrate</name>
    </ligand>
</feature>
<feature type="binding site" evidence="1">
    <location>
        <position position="121"/>
    </location>
    <ligand>
        <name>Mn(2+)</name>
        <dbReference type="ChEBI" id="CHEBI:29035"/>
        <label>1</label>
    </ligand>
</feature>
<feature type="binding site" evidence="1">
    <location>
        <begin position="147"/>
        <end position="151"/>
    </location>
    <ligand>
        <name>substrate</name>
    </ligand>
</feature>
<feature type="binding site" evidence="1">
    <location>
        <position position="147"/>
    </location>
    <ligand>
        <name>Mn(2+)</name>
        <dbReference type="ChEBI" id="CHEBI:29035"/>
        <label>2</label>
    </ligand>
</feature>
<feature type="binding site" evidence="1">
    <location>
        <position position="148"/>
    </location>
    <ligand>
        <name>Mn(2+)</name>
        <dbReference type="ChEBI" id="CHEBI:29035"/>
        <label>1</label>
    </ligand>
</feature>
<feature type="binding site" evidence="1">
    <location>
        <position position="151"/>
    </location>
    <ligand>
        <name>Mn(2+)</name>
        <dbReference type="ChEBI" id="CHEBI:29035"/>
        <label>2</label>
    </ligand>
</feature>
<feature type="binding site" evidence="1">
    <location>
        <position position="173"/>
    </location>
    <ligand>
        <name>substrate</name>
    </ligand>
</feature>
<feature type="binding site" evidence="1">
    <location>
        <position position="195"/>
    </location>
    <ligand>
        <name>substrate</name>
    </ligand>
</feature>
<feature type="binding site" evidence="1">
    <location>
        <position position="219"/>
    </location>
    <ligand>
        <name>Mn(2+)</name>
        <dbReference type="ChEBI" id="CHEBI:29035"/>
        <label>2</label>
    </ligand>
</feature>
<feature type="binding site" evidence="1">
    <location>
        <begin position="243"/>
        <end position="251"/>
    </location>
    <ligand>
        <name>substrate</name>
    </ligand>
</feature>
<feature type="binding site" evidence="1">
    <location>
        <position position="243"/>
    </location>
    <ligand>
        <name>Mn(2+)</name>
        <dbReference type="ChEBI" id="CHEBI:29035"/>
        <label>1</label>
    </ligand>
</feature>
<feature type="binding site" evidence="1">
    <location>
        <position position="244"/>
    </location>
    <ligand>
        <name>Mn(2+)</name>
        <dbReference type="ChEBI" id="CHEBI:29035"/>
        <label>2</label>
    </ligand>
</feature>
<feature type="binding site" evidence="1">
    <location>
        <position position="247"/>
    </location>
    <ligand>
        <name>Mn(2+)</name>
        <dbReference type="ChEBI" id="CHEBI:29035"/>
        <label>1</label>
    </ligand>
</feature>
<feature type="binding site" evidence="1">
    <location>
        <begin position="273"/>
        <end position="275"/>
    </location>
    <ligand>
        <name>substrate</name>
    </ligand>
</feature>
<gene>
    <name evidence="3" type="primary">HIS3</name>
</gene>
<dbReference type="EC" id="4.2.1.19" evidence="1"/>
<dbReference type="EMBL" id="U49978">
    <property type="protein sequence ID" value="AAB67738.1"/>
    <property type="molecule type" value="mRNA"/>
</dbReference>
<dbReference type="PIR" id="T06530">
    <property type="entry name" value="T06530"/>
</dbReference>
<dbReference type="SMR" id="Q43072"/>
<dbReference type="UniPathway" id="UPA00031">
    <property type="reaction ID" value="UER00011"/>
</dbReference>
<dbReference type="GO" id="GO:0009507">
    <property type="term" value="C:chloroplast"/>
    <property type="evidence" value="ECO:0007669"/>
    <property type="project" value="UniProtKB-SubCell"/>
</dbReference>
<dbReference type="GO" id="GO:0004424">
    <property type="term" value="F:imidazoleglycerol-phosphate dehydratase activity"/>
    <property type="evidence" value="ECO:0007669"/>
    <property type="project" value="UniProtKB-EC"/>
</dbReference>
<dbReference type="GO" id="GO:0046872">
    <property type="term" value="F:metal ion binding"/>
    <property type="evidence" value="ECO:0007669"/>
    <property type="project" value="UniProtKB-KW"/>
</dbReference>
<dbReference type="GO" id="GO:0000105">
    <property type="term" value="P:L-histidine biosynthetic process"/>
    <property type="evidence" value="ECO:0007669"/>
    <property type="project" value="UniProtKB-UniPathway"/>
</dbReference>
<dbReference type="CDD" id="cd07914">
    <property type="entry name" value="IGPD"/>
    <property type="match status" value="1"/>
</dbReference>
<dbReference type="FunFam" id="3.30.230.40:FF:000002">
    <property type="entry name" value="Imidazoleglycerol-phosphate dehydratase"/>
    <property type="match status" value="1"/>
</dbReference>
<dbReference type="FunFam" id="3.30.230.40:FF:000003">
    <property type="entry name" value="Imidazoleglycerol-phosphate dehydratase HisB"/>
    <property type="match status" value="1"/>
</dbReference>
<dbReference type="Gene3D" id="3.30.230.40">
    <property type="entry name" value="Imidazole glycerol phosphate dehydratase, domain 1"/>
    <property type="match status" value="2"/>
</dbReference>
<dbReference type="HAMAP" id="MF_00076">
    <property type="entry name" value="HisB"/>
    <property type="match status" value="1"/>
</dbReference>
<dbReference type="InterPro" id="IPR038494">
    <property type="entry name" value="IGPD_sf"/>
</dbReference>
<dbReference type="InterPro" id="IPR000807">
    <property type="entry name" value="ImidazoleglycerolP_deHydtase"/>
</dbReference>
<dbReference type="InterPro" id="IPR020565">
    <property type="entry name" value="ImidazoleglycerP_deHydtase_CS"/>
</dbReference>
<dbReference type="InterPro" id="IPR020568">
    <property type="entry name" value="Ribosomal_Su5_D2-typ_SF"/>
</dbReference>
<dbReference type="NCBIfam" id="NF002108">
    <property type="entry name" value="PRK00951.1-3"/>
    <property type="match status" value="1"/>
</dbReference>
<dbReference type="NCBIfam" id="NF002111">
    <property type="entry name" value="PRK00951.2-1"/>
    <property type="match status" value="1"/>
</dbReference>
<dbReference type="NCBIfam" id="NF002114">
    <property type="entry name" value="PRK00951.2-4"/>
    <property type="match status" value="1"/>
</dbReference>
<dbReference type="PANTHER" id="PTHR23133:SF2">
    <property type="entry name" value="IMIDAZOLEGLYCEROL-PHOSPHATE DEHYDRATASE"/>
    <property type="match status" value="1"/>
</dbReference>
<dbReference type="PANTHER" id="PTHR23133">
    <property type="entry name" value="IMIDAZOLEGLYCEROL-PHOSPHATE DEHYDRATASE HIS7"/>
    <property type="match status" value="1"/>
</dbReference>
<dbReference type="Pfam" id="PF00475">
    <property type="entry name" value="IGPD"/>
    <property type="match status" value="1"/>
</dbReference>
<dbReference type="SUPFAM" id="SSF54211">
    <property type="entry name" value="Ribosomal protein S5 domain 2-like"/>
    <property type="match status" value="2"/>
</dbReference>
<dbReference type="PROSITE" id="PS00954">
    <property type="entry name" value="IGP_DEHYDRATASE_1"/>
    <property type="match status" value="1"/>
</dbReference>
<dbReference type="PROSITE" id="PS00955">
    <property type="entry name" value="IGP_DEHYDRATASE_2"/>
    <property type="match status" value="1"/>
</dbReference>
<accession>Q43072</accession>
<name>HIS7_PEA</name>
<keyword id="KW-0028">Amino-acid biosynthesis</keyword>
<keyword id="KW-0150">Chloroplast</keyword>
<keyword id="KW-0368">Histidine biosynthesis</keyword>
<keyword id="KW-0456">Lyase</keyword>
<keyword id="KW-0464">Manganese</keyword>
<keyword id="KW-0479">Metal-binding</keyword>
<keyword id="KW-0934">Plastid</keyword>
<keyword id="KW-0809">Transit peptide</keyword>
<evidence type="ECO:0000250" key="1">
    <source>
        <dbReference type="UniProtKB" id="O23346"/>
    </source>
</evidence>
<evidence type="ECO:0000255" key="2"/>
<evidence type="ECO:0000303" key="3">
    <source ref="1"/>
</evidence>
<evidence type="ECO:0000305" key="4"/>